<dbReference type="EMBL" id="CP000510">
    <property type="protein sequence ID" value="ABM02704.1"/>
    <property type="molecule type" value="Genomic_DNA"/>
</dbReference>
<dbReference type="RefSeq" id="WP_011769267.1">
    <property type="nucleotide sequence ID" value="NC_008709.1"/>
</dbReference>
<dbReference type="SMR" id="A1ST89"/>
<dbReference type="STRING" id="357804.Ping_0862"/>
<dbReference type="KEGG" id="pin:Ping_0862"/>
<dbReference type="eggNOG" id="COG3076">
    <property type="taxonomic scope" value="Bacteria"/>
</dbReference>
<dbReference type="HOGENOM" id="CLU_128640_0_0_6"/>
<dbReference type="OrthoDB" id="7065464at2"/>
<dbReference type="Proteomes" id="UP000000639">
    <property type="component" value="Chromosome"/>
</dbReference>
<dbReference type="GO" id="GO:0005737">
    <property type="term" value="C:cytoplasm"/>
    <property type="evidence" value="ECO:0007669"/>
    <property type="project" value="UniProtKB-SubCell"/>
</dbReference>
<dbReference type="GO" id="GO:0060698">
    <property type="term" value="F:endoribonuclease inhibitor activity"/>
    <property type="evidence" value="ECO:0007669"/>
    <property type="project" value="UniProtKB-UniRule"/>
</dbReference>
<dbReference type="GO" id="GO:0019899">
    <property type="term" value="F:enzyme binding"/>
    <property type="evidence" value="ECO:0007669"/>
    <property type="project" value="UniProtKB-UniRule"/>
</dbReference>
<dbReference type="Gene3D" id="3.30.70.970">
    <property type="entry name" value="RraB-like"/>
    <property type="match status" value="1"/>
</dbReference>
<dbReference type="HAMAP" id="MF_01888">
    <property type="entry name" value="RraB"/>
    <property type="match status" value="1"/>
</dbReference>
<dbReference type="InterPro" id="IPR016716">
    <property type="entry name" value="RraB"/>
</dbReference>
<dbReference type="InterPro" id="IPR036701">
    <property type="entry name" value="RraB-like_sf"/>
</dbReference>
<dbReference type="InterPro" id="IPR009671">
    <property type="entry name" value="RraB_dom"/>
</dbReference>
<dbReference type="NCBIfam" id="NF008393">
    <property type="entry name" value="PRK11191.1"/>
    <property type="match status" value="1"/>
</dbReference>
<dbReference type="Pfam" id="PF06877">
    <property type="entry name" value="RraB"/>
    <property type="match status" value="1"/>
</dbReference>
<dbReference type="PIRSF" id="PIRSF018193">
    <property type="entry name" value="UCP018193"/>
    <property type="match status" value="1"/>
</dbReference>
<dbReference type="SUPFAM" id="SSF89946">
    <property type="entry name" value="Hypothetical protein VC0424"/>
    <property type="match status" value="1"/>
</dbReference>
<protein>
    <recommendedName>
        <fullName evidence="1">Regulator of ribonuclease activity B</fullName>
    </recommendedName>
</protein>
<reference key="1">
    <citation type="journal article" date="2008" name="BMC Genomics">
        <title>Genomics of an extreme psychrophile, Psychromonas ingrahamii.</title>
        <authorList>
            <person name="Riley M."/>
            <person name="Staley J.T."/>
            <person name="Danchin A."/>
            <person name="Wang T.Z."/>
            <person name="Brettin T.S."/>
            <person name="Hauser L.J."/>
            <person name="Land M.L."/>
            <person name="Thompson L.S."/>
        </authorList>
    </citation>
    <scope>NUCLEOTIDE SEQUENCE [LARGE SCALE GENOMIC DNA]</scope>
    <source>
        <strain>DSM 17664 / CCUG 51855 / 37</strain>
    </source>
</reference>
<proteinExistence type="inferred from homology"/>
<name>RRAB_PSYIN</name>
<keyword id="KW-0963">Cytoplasm</keyword>
<keyword id="KW-1185">Reference proteome</keyword>
<comment type="function">
    <text evidence="1">Globally modulates RNA abundance by binding to RNase E (Rne) and regulating its endonucleolytic activity. Can modulate Rne action in a substrate-dependent manner by altering the composition of the degradosome.</text>
</comment>
<comment type="subunit">
    <text evidence="1">Interacts with the C-terminal region of Rne.</text>
</comment>
<comment type="subcellular location">
    <subcellularLocation>
        <location evidence="1">Cytoplasm</location>
    </subcellularLocation>
</comment>
<comment type="similarity">
    <text evidence="1">Belongs to the RraB family.</text>
</comment>
<accession>A1ST89</accession>
<organism>
    <name type="scientific">Psychromonas ingrahamii (strain DSM 17664 / CCUG 51855 / 37)</name>
    <dbReference type="NCBI Taxonomy" id="357804"/>
    <lineage>
        <taxon>Bacteria</taxon>
        <taxon>Pseudomonadati</taxon>
        <taxon>Pseudomonadota</taxon>
        <taxon>Gammaproteobacteria</taxon>
        <taxon>Alteromonadales</taxon>
        <taxon>Psychromonadaceae</taxon>
        <taxon>Psychromonas</taxon>
    </lineage>
</organism>
<sequence length="121" mass="13736">MEKALSLEELLAEYREETEEIVEAILEDGSNPDAVYMIEHHLSCTDFDVLEKAAIACFKKGYEVTDPEECELEDGSIILSFDVTVEMNLDEEAIMEDIEKLVVLAQSFSIDYDGWGTYPEE</sequence>
<feature type="chain" id="PRO_0000404314" description="Regulator of ribonuclease activity B">
    <location>
        <begin position="1"/>
        <end position="121"/>
    </location>
</feature>
<evidence type="ECO:0000255" key="1">
    <source>
        <dbReference type="HAMAP-Rule" id="MF_01888"/>
    </source>
</evidence>
<gene>
    <name evidence="1" type="primary">rraB</name>
    <name type="ordered locus">Ping_0862</name>
</gene>